<comment type="function">
    <text>Fimbriae (also called pili), polar filaments radiating from the surface of the bacterium to a length of 0.5-1.5 micrometers and numbering 100-300 per cell, enable bacteria to colonize the epithelium of specific host organs.</text>
</comment>
<comment type="subcellular location">
    <subcellularLocation>
        <location>Fimbrium</location>
    </subcellularLocation>
</comment>
<comment type="induction">
    <text>CS1 fimbriae are only expressed in the presence of the positive regulator rns.</text>
</comment>
<comment type="similarity">
    <text evidence="2">Belongs to the fimbrial CS1 protein family.</text>
</comment>
<keyword id="KW-0002">3D-structure</keyword>
<keyword id="KW-0903">Direct protein sequencing</keyword>
<keyword id="KW-0281">Fimbrium</keyword>
<keyword id="KW-0614">Plasmid</keyword>
<keyword id="KW-0732">Signal</keyword>
<geneLocation type="plasmid">
    <name>pDEP23</name>
</geneLocation>
<evidence type="ECO:0000269" key="1">
    <source>
    </source>
</evidence>
<evidence type="ECO:0000305" key="2"/>
<evidence type="ECO:0007829" key="3">
    <source>
        <dbReference type="PDB" id="4HJI"/>
    </source>
</evidence>
<sequence>MKLKKTIGAMALATLFATMGASAVEKTISVTASVDPTVDLLQSDGSALPNSVALTYSPAVNNFEAHTINTVVHTNDSDKGVVVKLSADPVLSNVLNPTLQIPVSVNFAGKPLSTTGITIDSNDLNFASSGVNKVSSTQKLSIHADATRVTGGALTAGQYQGLVSIILTKST</sequence>
<name>CSOA_ECOLX</name>
<dbReference type="EMBL" id="X62879">
    <property type="protein sequence ID" value="CAA44673.1"/>
    <property type="molecule type" value="Genomic_DNA"/>
</dbReference>
<dbReference type="PIR" id="A41467">
    <property type="entry name" value="A41467"/>
</dbReference>
<dbReference type="RefSeq" id="WP_000768757.1">
    <property type="nucleotide sequence ID" value="NZ_LRLU01000168.1"/>
</dbReference>
<dbReference type="RefSeq" id="YP_424820.1">
    <property type="nucleotide sequence ID" value="NC_007635.1"/>
</dbReference>
<dbReference type="PDB" id="4HJI">
    <property type="method" value="X-ray"/>
    <property type="resolution" value="1.60 A"/>
    <property type="chains" value="A/B=35-171"/>
</dbReference>
<dbReference type="PDBsum" id="4HJI"/>
<dbReference type="SMR" id="P0ABW7"/>
<dbReference type="EvolutionaryTrace" id="P0ABW7"/>
<dbReference type="GO" id="GO:0009289">
    <property type="term" value="C:pilus"/>
    <property type="evidence" value="ECO:0007669"/>
    <property type="project" value="UniProtKB-SubCell"/>
</dbReference>
<dbReference type="Gene3D" id="2.60.40.2040">
    <property type="entry name" value="CFA/I fimbrial subunit E, pilin domain"/>
    <property type="match status" value="1"/>
</dbReference>
<dbReference type="InterPro" id="IPR007540">
    <property type="entry name" value="Fimbrial_CS1-type"/>
</dbReference>
<dbReference type="Pfam" id="PF04449">
    <property type="entry name" value="Fimbrial_CS1"/>
    <property type="match status" value="1"/>
</dbReference>
<proteinExistence type="evidence at protein level"/>
<reference key="1">
    <citation type="journal article" date="1991" name="FEMS Microbiol. Lett.">
        <title>Analysis of the first two genes of the CS1 fimbrial operon in human enterotoxigenic Escherichia coli of serotype 0139:H28.</title>
        <authorList>
            <person name="Jordi B.J.A.M."/>
            <person name="van Vliet A.H.M."/>
            <person name="Willshaw G.A."/>
            <person name="van der Zeijst B.A.M."/>
            <person name="Gaastra W."/>
        </authorList>
    </citation>
    <scope>NUCLEOTIDE SEQUENCE [GENOMIC DNA]</scope>
    <source>
        <strain>O139:H28 / ETEC</strain>
        <plasmid>pDEP23</plasmid>
    </source>
</reference>
<reference key="2">
    <citation type="journal article" date="1989" name="J. Bacteriol.">
        <title>Purification and analysis of colonization factor antigen I, coli surface antigen 1, and coli surface antigen 3 fimbriae from enterotoxigenic Escherichia coli.</title>
        <authorList>
            <person name="Hall R.H."/>
            <person name="Maneval D.R. Jr."/>
            <person name="Collins J.H."/>
            <person name="Theibert J.L."/>
            <person name="Levine M.M."/>
        </authorList>
    </citation>
    <scope>PROTEIN SEQUENCE OF 24-42</scope>
    <source>
        <strain>60R75</strain>
    </source>
</reference>
<accession>P0ABW7</accession>
<accession>P25730</accession>
<feature type="signal peptide" evidence="1">
    <location>
        <begin position="1"/>
        <end position="23"/>
    </location>
</feature>
<feature type="chain" id="PRO_0000009180" description="CS1 fimbrial subunit A">
    <location>
        <begin position="24"/>
        <end position="171"/>
    </location>
</feature>
<feature type="sequence conflict" description="In Ref. 2; AA sequence." evidence="2" ref="2">
    <original>I</original>
    <variation>E</variation>
    <location>
        <position position="28"/>
    </location>
</feature>
<feature type="strand" evidence="3">
    <location>
        <begin position="37"/>
        <end position="42"/>
    </location>
</feature>
<feature type="strand" evidence="3">
    <location>
        <begin position="50"/>
        <end position="54"/>
    </location>
</feature>
<feature type="turn" evidence="3">
    <location>
        <begin position="58"/>
        <end position="61"/>
    </location>
</feature>
<feature type="strand" evidence="3">
    <location>
        <begin position="66"/>
        <end position="75"/>
    </location>
</feature>
<feature type="strand" evidence="3">
    <location>
        <begin position="81"/>
        <end position="87"/>
    </location>
</feature>
<feature type="strand" evidence="3">
    <location>
        <begin position="90"/>
        <end position="95"/>
    </location>
</feature>
<feature type="strand" evidence="3">
    <location>
        <begin position="99"/>
        <end position="107"/>
    </location>
</feature>
<feature type="strand" evidence="3">
    <location>
        <begin position="117"/>
        <end position="119"/>
    </location>
</feature>
<feature type="helix" evidence="3">
    <location>
        <begin position="121"/>
        <end position="124"/>
    </location>
</feature>
<feature type="strand" evidence="3">
    <location>
        <begin position="127"/>
        <end position="129"/>
    </location>
</feature>
<feature type="strand" evidence="3">
    <location>
        <begin position="132"/>
        <end position="134"/>
    </location>
</feature>
<feature type="strand" evidence="3">
    <location>
        <begin position="138"/>
        <end position="144"/>
    </location>
</feature>
<feature type="helix" evidence="3">
    <location>
        <begin position="146"/>
        <end position="148"/>
    </location>
</feature>
<feature type="strand" evidence="3">
    <location>
        <begin position="150"/>
        <end position="152"/>
    </location>
</feature>
<feature type="strand" evidence="3">
    <location>
        <begin position="156"/>
        <end position="169"/>
    </location>
</feature>
<organism>
    <name type="scientific">Escherichia coli</name>
    <dbReference type="NCBI Taxonomy" id="562"/>
    <lineage>
        <taxon>Bacteria</taxon>
        <taxon>Pseudomonadati</taxon>
        <taxon>Pseudomonadota</taxon>
        <taxon>Gammaproteobacteria</taxon>
        <taxon>Enterobacterales</taxon>
        <taxon>Enterobacteriaceae</taxon>
        <taxon>Escherichia</taxon>
    </lineage>
</organism>
<gene>
    <name type="primary">csoA</name>
    <name type="synonym">cooA</name>
</gene>
<protein>
    <recommendedName>
        <fullName>CS1 fimbrial subunit A</fullName>
    </recommendedName>
    <alternativeName>
        <fullName>CS1 pilin</fullName>
    </alternativeName>
</protein>